<reference key="1">
    <citation type="journal article" date="2008" name="Genomics">
        <title>Evolution in the laboratory: the genome of Halobacterium salinarum strain R1 compared to that of strain NRC-1.</title>
        <authorList>
            <person name="Pfeiffer F."/>
            <person name="Schuster S.C."/>
            <person name="Broicher A."/>
            <person name="Falb M."/>
            <person name="Palm P."/>
            <person name="Rodewald K."/>
            <person name="Ruepp A."/>
            <person name="Soppa J."/>
            <person name="Tittor J."/>
            <person name="Oesterhelt D."/>
        </authorList>
    </citation>
    <scope>NUCLEOTIDE SEQUENCE [LARGE SCALE GENOMIC DNA]</scope>
    <source>
        <strain>ATCC 29341 / DSM 671 / R1</strain>
    </source>
</reference>
<proteinExistence type="inferred from homology"/>
<gene>
    <name evidence="2" type="primary">infB</name>
    <name type="ordered locus">OE_3800F</name>
</gene>
<comment type="function">
    <text evidence="2">Function in general translation initiation by promoting the binding of the formylmethionine-tRNA to ribosomes. Seems to function along with eIF-2.</text>
</comment>
<comment type="similarity">
    <text evidence="2">Belongs to the TRAFAC class translation factor GTPase superfamily. Classic translation factor GTPase family. IF-2 subfamily.</text>
</comment>
<protein>
    <recommendedName>
        <fullName evidence="2">Probable translation initiation factor IF-2</fullName>
    </recommendedName>
</protein>
<organism>
    <name type="scientific">Halobacterium salinarum (strain ATCC 29341 / DSM 671 / R1)</name>
    <dbReference type="NCBI Taxonomy" id="478009"/>
    <lineage>
        <taxon>Archaea</taxon>
        <taxon>Methanobacteriati</taxon>
        <taxon>Methanobacteriota</taxon>
        <taxon>Stenosarchaea group</taxon>
        <taxon>Halobacteria</taxon>
        <taxon>Halobacteriales</taxon>
        <taxon>Halobacteriaceae</taxon>
        <taxon>Halobacterium</taxon>
        <taxon>Halobacterium salinarum NRC-34001</taxon>
    </lineage>
</organism>
<keyword id="KW-0342">GTP-binding</keyword>
<keyword id="KW-0396">Initiation factor</keyword>
<keyword id="KW-0547">Nucleotide-binding</keyword>
<keyword id="KW-0648">Protein biosynthesis</keyword>
<feature type="chain" id="PRO_1000093790" description="Probable translation initiation factor IF-2">
    <location>
        <begin position="1"/>
        <end position="600"/>
    </location>
</feature>
<feature type="domain" description="tr-type G">
    <location>
        <begin position="13"/>
        <end position="228"/>
    </location>
</feature>
<feature type="region of interest" description="G1" evidence="1">
    <location>
        <begin position="22"/>
        <end position="29"/>
    </location>
</feature>
<feature type="region of interest" description="G2" evidence="1">
    <location>
        <begin position="47"/>
        <end position="51"/>
    </location>
</feature>
<feature type="region of interest" description="G3" evidence="1">
    <location>
        <begin position="84"/>
        <end position="87"/>
    </location>
</feature>
<feature type="region of interest" description="G4" evidence="1">
    <location>
        <begin position="138"/>
        <end position="141"/>
    </location>
</feature>
<feature type="region of interest" description="Disordered" evidence="3">
    <location>
        <begin position="140"/>
        <end position="162"/>
    </location>
</feature>
<feature type="region of interest" description="G5" evidence="1">
    <location>
        <begin position="206"/>
        <end position="208"/>
    </location>
</feature>
<feature type="binding site" evidence="2">
    <location>
        <begin position="22"/>
        <end position="29"/>
    </location>
    <ligand>
        <name>GTP</name>
        <dbReference type="ChEBI" id="CHEBI:37565"/>
    </ligand>
</feature>
<feature type="binding site" evidence="2">
    <location>
        <begin position="84"/>
        <end position="88"/>
    </location>
    <ligand>
        <name>GTP</name>
        <dbReference type="ChEBI" id="CHEBI:37565"/>
    </ligand>
</feature>
<feature type="binding site" evidence="2">
    <location>
        <begin position="138"/>
        <end position="141"/>
    </location>
    <ligand>
        <name>GTP</name>
        <dbReference type="ChEBI" id="CHEBI:37565"/>
    </ligand>
</feature>
<sequence>MPDADTTDDPGDLRTPIVAVLGHVDHGKTSLLDKIRGSAVIEGEAGAITQHIGATAVPLDTVSEVAGSLVDPTEFDLPGLLFIDTPGHHSFSTLRSRGGALADIAILVVDVNDGFQPQTEEAIRILKDTGTPFVVAANKIDTTPGWNPNPDAPVQGTYDDQSDRVRSDLDDALYELIGEMSDAGFSSDLYWRVQNFQKNVGVIPVSAETGEGVPDLLTVLMGLAQRYMKSEMEVTIDGPGAGTVLEVKDEQGFGTTVDVILYDGTIRSGDTVVVGAQPEPIVTDVRALLKPGDLAEMRTEKRFGNVDRMQAAAGLKVAAPDLDDAMAGAPIRVVGDRDVADVVTEVEAELAEVAVETGEEGIVVKADTLGSLEALVSALEEAEIPVMSAEVGDVAPRDVAMATTVDSEKHRVLLGFNVDVLPAAAENAERESVRVFNSDVIYQLVEDYEAFVDAQEREQKEAVFDNIVRPARFRILKDHVFRQNDPAVVGVEVVSGTLKRNTPVGGIEGNDLDRAGIVKGIQDQGEDVDEARAGNRVSVSIDGPTVGRDIKEGDELWVDLPEKHAKVLDQELTSDLPADEREALKSYLDIMRKRDPFWGK</sequence>
<name>IF2P_HALS3</name>
<evidence type="ECO:0000250" key="1"/>
<evidence type="ECO:0000255" key="2">
    <source>
        <dbReference type="HAMAP-Rule" id="MF_00100"/>
    </source>
</evidence>
<evidence type="ECO:0000256" key="3">
    <source>
        <dbReference type="SAM" id="MobiDB-lite"/>
    </source>
</evidence>
<dbReference type="EMBL" id="AM774415">
    <property type="protein sequence ID" value="CAP14464.1"/>
    <property type="molecule type" value="Genomic_DNA"/>
</dbReference>
<dbReference type="RefSeq" id="WP_010903469.1">
    <property type="nucleotide sequence ID" value="NC_010364.1"/>
</dbReference>
<dbReference type="SMR" id="B0R6U5"/>
<dbReference type="EnsemblBacteria" id="CAP14464">
    <property type="protein sequence ID" value="CAP14464"/>
    <property type="gene ID" value="OE_3800F"/>
</dbReference>
<dbReference type="GeneID" id="89350183"/>
<dbReference type="KEGG" id="hsl:OE_3800F"/>
<dbReference type="HOGENOM" id="CLU_002656_3_3_2"/>
<dbReference type="PhylomeDB" id="B0R6U5"/>
<dbReference type="Proteomes" id="UP000001321">
    <property type="component" value="Chromosome"/>
</dbReference>
<dbReference type="GO" id="GO:0005737">
    <property type="term" value="C:cytoplasm"/>
    <property type="evidence" value="ECO:0007669"/>
    <property type="project" value="TreeGrafter"/>
</dbReference>
<dbReference type="GO" id="GO:0005525">
    <property type="term" value="F:GTP binding"/>
    <property type="evidence" value="ECO:0007669"/>
    <property type="project" value="UniProtKB-KW"/>
</dbReference>
<dbReference type="GO" id="GO:0003924">
    <property type="term" value="F:GTPase activity"/>
    <property type="evidence" value="ECO:0007669"/>
    <property type="project" value="UniProtKB-UniRule"/>
</dbReference>
<dbReference type="GO" id="GO:0003743">
    <property type="term" value="F:translation initiation factor activity"/>
    <property type="evidence" value="ECO:0007669"/>
    <property type="project" value="UniProtKB-UniRule"/>
</dbReference>
<dbReference type="CDD" id="cd03703">
    <property type="entry name" value="aeIF5B_II"/>
    <property type="match status" value="1"/>
</dbReference>
<dbReference type="CDD" id="cd16266">
    <property type="entry name" value="IF2_aeIF5B_IV"/>
    <property type="match status" value="1"/>
</dbReference>
<dbReference type="CDD" id="cd01887">
    <property type="entry name" value="IF2_eIF5B"/>
    <property type="match status" value="1"/>
</dbReference>
<dbReference type="FunFam" id="3.40.50.300:FF:000112">
    <property type="entry name" value="Eukaryotic translation initiation factor 5B"/>
    <property type="match status" value="1"/>
</dbReference>
<dbReference type="FunFam" id="2.40.30.10:FF:000013">
    <property type="entry name" value="eukaryotic translation initiation factor 5B"/>
    <property type="match status" value="1"/>
</dbReference>
<dbReference type="FunFam" id="2.40.30.10:FF:000225">
    <property type="entry name" value="Probable translation initiation factor IF-2"/>
    <property type="match status" value="1"/>
</dbReference>
<dbReference type="FunFam" id="3.40.50.10050:FF:000001">
    <property type="entry name" value="Translation initiation factor IF-2"/>
    <property type="match status" value="1"/>
</dbReference>
<dbReference type="Gene3D" id="3.40.50.300">
    <property type="entry name" value="P-loop containing nucleotide triphosphate hydrolases"/>
    <property type="match status" value="1"/>
</dbReference>
<dbReference type="Gene3D" id="2.40.30.10">
    <property type="entry name" value="Translation factors"/>
    <property type="match status" value="2"/>
</dbReference>
<dbReference type="Gene3D" id="3.40.50.10050">
    <property type="entry name" value="Translation initiation factor IF- 2, domain 3"/>
    <property type="match status" value="1"/>
</dbReference>
<dbReference type="HAMAP" id="MF_00100_A">
    <property type="entry name" value="IF_2_A"/>
    <property type="match status" value="1"/>
</dbReference>
<dbReference type="InterPro" id="IPR004161">
    <property type="entry name" value="EFTu-like_2"/>
</dbReference>
<dbReference type="InterPro" id="IPR029459">
    <property type="entry name" value="EFTU-type"/>
</dbReference>
<dbReference type="InterPro" id="IPR027417">
    <property type="entry name" value="P-loop_NTPase"/>
</dbReference>
<dbReference type="InterPro" id="IPR005225">
    <property type="entry name" value="Small_GTP-bd"/>
</dbReference>
<dbReference type="InterPro" id="IPR000795">
    <property type="entry name" value="T_Tr_GTP-bd_dom"/>
</dbReference>
<dbReference type="InterPro" id="IPR004544">
    <property type="entry name" value="TF_aIF-2_arc"/>
</dbReference>
<dbReference type="InterPro" id="IPR015760">
    <property type="entry name" value="TIF_IF2"/>
</dbReference>
<dbReference type="InterPro" id="IPR023115">
    <property type="entry name" value="TIF_IF2_dom3"/>
</dbReference>
<dbReference type="InterPro" id="IPR036925">
    <property type="entry name" value="TIF_IF2_dom3_sf"/>
</dbReference>
<dbReference type="InterPro" id="IPR009000">
    <property type="entry name" value="Transl_B-barrel_sf"/>
</dbReference>
<dbReference type="NCBIfam" id="TIGR00491">
    <property type="entry name" value="aIF-2"/>
    <property type="match status" value="1"/>
</dbReference>
<dbReference type="NCBIfam" id="NF003078">
    <property type="entry name" value="PRK04004.1"/>
    <property type="match status" value="1"/>
</dbReference>
<dbReference type="NCBIfam" id="TIGR00231">
    <property type="entry name" value="small_GTP"/>
    <property type="match status" value="1"/>
</dbReference>
<dbReference type="PANTHER" id="PTHR43381:SF4">
    <property type="entry name" value="EUKARYOTIC TRANSLATION INITIATION FACTOR 5B"/>
    <property type="match status" value="1"/>
</dbReference>
<dbReference type="PANTHER" id="PTHR43381">
    <property type="entry name" value="TRANSLATION INITIATION FACTOR IF-2-RELATED"/>
    <property type="match status" value="1"/>
</dbReference>
<dbReference type="Pfam" id="PF00009">
    <property type="entry name" value="GTP_EFTU"/>
    <property type="match status" value="1"/>
</dbReference>
<dbReference type="Pfam" id="PF03144">
    <property type="entry name" value="GTP_EFTU_D2"/>
    <property type="match status" value="1"/>
</dbReference>
<dbReference type="Pfam" id="PF14578">
    <property type="entry name" value="GTP_EFTU_D4"/>
    <property type="match status" value="1"/>
</dbReference>
<dbReference type="Pfam" id="PF11987">
    <property type="entry name" value="IF-2"/>
    <property type="match status" value="1"/>
</dbReference>
<dbReference type="PRINTS" id="PR00315">
    <property type="entry name" value="ELONGATNFCT"/>
</dbReference>
<dbReference type="SUPFAM" id="SSF52156">
    <property type="entry name" value="Initiation factor IF2/eIF5b, domain 3"/>
    <property type="match status" value="1"/>
</dbReference>
<dbReference type="SUPFAM" id="SSF52540">
    <property type="entry name" value="P-loop containing nucleoside triphosphate hydrolases"/>
    <property type="match status" value="1"/>
</dbReference>
<dbReference type="SUPFAM" id="SSF50447">
    <property type="entry name" value="Translation proteins"/>
    <property type="match status" value="1"/>
</dbReference>
<dbReference type="PROSITE" id="PS51722">
    <property type="entry name" value="G_TR_2"/>
    <property type="match status" value="1"/>
</dbReference>
<accession>B0R6U5</accession>